<accession>B1NWD6</accession>
<organism>
    <name type="scientific">Manihot esculenta</name>
    <name type="common">Cassava</name>
    <name type="synonym">Jatropha manihot</name>
    <dbReference type="NCBI Taxonomy" id="3983"/>
    <lineage>
        <taxon>Eukaryota</taxon>
        <taxon>Viridiplantae</taxon>
        <taxon>Streptophyta</taxon>
        <taxon>Embryophyta</taxon>
        <taxon>Tracheophyta</taxon>
        <taxon>Spermatophyta</taxon>
        <taxon>Magnoliopsida</taxon>
        <taxon>eudicotyledons</taxon>
        <taxon>Gunneridae</taxon>
        <taxon>Pentapetalae</taxon>
        <taxon>rosids</taxon>
        <taxon>fabids</taxon>
        <taxon>Malpighiales</taxon>
        <taxon>Euphorbiaceae</taxon>
        <taxon>Crotonoideae</taxon>
        <taxon>Manihoteae</taxon>
        <taxon>Manihot</taxon>
    </lineage>
</organism>
<feature type="chain" id="PRO_0000368951" description="ATP synthase subunit b, chloroplastic">
    <location>
        <begin position="1"/>
        <end position="184"/>
    </location>
</feature>
<feature type="transmembrane region" description="Helical" evidence="1">
    <location>
        <begin position="27"/>
        <end position="49"/>
    </location>
</feature>
<geneLocation type="chloroplast"/>
<reference key="1">
    <citation type="journal article" date="2008" name="Theor. Appl. Genet.">
        <title>The complete nucleotide sequence of the cassava (Manihot esculenta) chloroplast genome and the evolution of atpF in Malpighiales: RNA editing and multiple losses of a group II intron.</title>
        <authorList>
            <person name="Daniell H."/>
            <person name="Wurdack K.J."/>
            <person name="Kanagaraj A."/>
            <person name="Lee S.-B."/>
            <person name="Saski C."/>
            <person name="Jansen R.K."/>
        </authorList>
    </citation>
    <scope>NUCLEOTIDE SEQUENCE [LARGE SCALE GENOMIC DNA]</scope>
    <source>
        <strain>cv. TME3</strain>
    </source>
</reference>
<sequence>MKNITDSFVSLGHWPSAGSFGFNTDILATNLINLSVVLGVLIFFGKGVLSDLLDNRKQRILDTIRNSEKLREGAIEQLEKARARLRKVEIEADQFRTNGYSEIEREKLNLINSTYKTLEQLENYKNETIHFEQQRTINQVRQRVFQQALQGALGTLNSCLTNELHLRTINANLGMFGAIKEITD</sequence>
<evidence type="ECO:0000255" key="1">
    <source>
        <dbReference type="HAMAP-Rule" id="MF_01398"/>
    </source>
</evidence>
<protein>
    <recommendedName>
        <fullName evidence="1">ATP synthase subunit b, chloroplastic</fullName>
    </recommendedName>
    <alternativeName>
        <fullName evidence="1">ATP synthase F(0) sector subunit b</fullName>
    </alternativeName>
    <alternativeName>
        <fullName evidence="1">ATPase subunit I</fullName>
    </alternativeName>
</protein>
<proteinExistence type="inferred from homology"/>
<dbReference type="EMBL" id="EU117376">
    <property type="protein sequence ID" value="ABV66140.1"/>
    <property type="molecule type" value="Genomic_DNA"/>
</dbReference>
<dbReference type="RefSeq" id="YP_001718423.1">
    <property type="nucleotide sequence ID" value="NC_010433.1"/>
</dbReference>
<dbReference type="SMR" id="B1NWD6"/>
<dbReference type="GeneID" id="6000008"/>
<dbReference type="KEGG" id="mesc:6000008"/>
<dbReference type="OrthoDB" id="816859at2759"/>
<dbReference type="GO" id="GO:0009535">
    <property type="term" value="C:chloroplast thylakoid membrane"/>
    <property type="evidence" value="ECO:0007669"/>
    <property type="project" value="UniProtKB-SubCell"/>
</dbReference>
<dbReference type="GO" id="GO:0045259">
    <property type="term" value="C:proton-transporting ATP synthase complex"/>
    <property type="evidence" value="ECO:0007669"/>
    <property type="project" value="UniProtKB-KW"/>
</dbReference>
<dbReference type="GO" id="GO:0046933">
    <property type="term" value="F:proton-transporting ATP synthase activity, rotational mechanism"/>
    <property type="evidence" value="ECO:0007669"/>
    <property type="project" value="UniProtKB-UniRule"/>
</dbReference>
<dbReference type="CDD" id="cd06503">
    <property type="entry name" value="ATP-synt_Fo_b"/>
    <property type="match status" value="1"/>
</dbReference>
<dbReference type="HAMAP" id="MF_01398">
    <property type="entry name" value="ATP_synth_b_bprime"/>
    <property type="match status" value="1"/>
</dbReference>
<dbReference type="InterPro" id="IPR002146">
    <property type="entry name" value="ATP_synth_b/b'su_bac/chlpt"/>
</dbReference>
<dbReference type="PANTHER" id="PTHR34264">
    <property type="entry name" value="ATP SYNTHASE SUBUNIT B, CHLOROPLASTIC"/>
    <property type="match status" value="1"/>
</dbReference>
<dbReference type="PANTHER" id="PTHR34264:SF3">
    <property type="entry name" value="ATP SYNTHASE SUBUNIT B, CHLOROPLASTIC"/>
    <property type="match status" value="1"/>
</dbReference>
<dbReference type="Pfam" id="PF00430">
    <property type="entry name" value="ATP-synt_B"/>
    <property type="match status" value="1"/>
</dbReference>
<keyword id="KW-0066">ATP synthesis</keyword>
<keyword id="KW-0138">CF(0)</keyword>
<keyword id="KW-0150">Chloroplast</keyword>
<keyword id="KW-0375">Hydrogen ion transport</keyword>
<keyword id="KW-0406">Ion transport</keyword>
<keyword id="KW-0472">Membrane</keyword>
<keyword id="KW-0934">Plastid</keyword>
<keyword id="KW-0793">Thylakoid</keyword>
<keyword id="KW-0812">Transmembrane</keyword>
<keyword id="KW-1133">Transmembrane helix</keyword>
<keyword id="KW-0813">Transport</keyword>
<name>ATPF_MANES</name>
<comment type="function">
    <text evidence="1">F(1)F(0) ATP synthase produces ATP from ADP in the presence of a proton or sodium gradient. F-type ATPases consist of two structural domains, F(1) containing the extramembraneous catalytic core and F(0) containing the membrane proton channel, linked together by a central stalk and a peripheral stalk. During catalysis, ATP synthesis in the catalytic domain of F(1) is coupled via a rotary mechanism of the central stalk subunits to proton translocation.</text>
</comment>
<comment type="function">
    <text evidence="1">Component of the F(0) channel, it forms part of the peripheral stalk, linking F(1) to F(0).</text>
</comment>
<comment type="subunit">
    <text evidence="1">F-type ATPases have 2 components, F(1) - the catalytic core - and F(0) - the membrane proton channel. F(1) has five subunits: alpha(3), beta(3), gamma(1), delta(1), epsilon(1). F(0) has four main subunits: a(1), b(1), b'(1) and c(10-14). The alpha and beta chains form an alternating ring which encloses part of the gamma chain. F(1) is attached to F(0) by a central stalk formed by the gamma and epsilon chains, while a peripheral stalk is formed by the delta, b and b' chains.</text>
</comment>
<comment type="subcellular location">
    <subcellularLocation>
        <location evidence="1">Plastid</location>
        <location evidence="1">Chloroplast thylakoid membrane</location>
        <topology evidence="1">Single-pass membrane protein</topology>
    </subcellularLocation>
</comment>
<comment type="miscellaneous">
    <text>In plastids the F-type ATPase is also known as CF(1)CF(0).</text>
</comment>
<comment type="similarity">
    <text evidence="1">Belongs to the ATPase B chain family.</text>
</comment>
<gene>
    <name evidence="1" type="primary">atpF</name>
</gene>